<reference evidence="4" key="1">
    <citation type="submission" date="2010-09" db="UniProtKB">
        <title>Bradykinin-related peptides in skin secretion of Physalaemus signifer (Girard, 1853) (Anura, Leiuperidae).</title>
        <authorList>
            <person name="Rates B."/>
            <person name="Ireno I.C."/>
            <person name="Canelas M.A."/>
            <person name="de Lima M.E."/>
            <person name="Pimenta A.M.C."/>
        </authorList>
    </citation>
    <scope>PROTEIN SEQUENCE</scope>
    <scope>SUBCELLULAR LOCATION</scope>
    <scope>TISSUE SPECIFICITY</scope>
    <source>
        <tissue evidence="2">Skin secretion</tissue>
    </source>
</reference>
<evidence type="ECO:0000250" key="1"/>
<evidence type="ECO:0000269" key="2">
    <source ref="1"/>
</evidence>
<evidence type="ECO:0000303" key="3">
    <source ref="1"/>
</evidence>
<evidence type="ECO:0000305" key="4"/>
<protein>
    <recommendedName>
        <fullName evidence="3">[Ala1,Thr6]-bradykinin</fullName>
    </recommendedName>
</protein>
<keyword id="KW-0878">Amphibian defense peptide</keyword>
<keyword id="KW-0903">Direct protein sequencing</keyword>
<keyword id="KW-1213">G-protein coupled receptor impairing toxin</keyword>
<keyword id="KW-0964">Secreted</keyword>
<keyword id="KW-0800">Toxin</keyword>
<keyword id="KW-0838">Vasoactive</keyword>
<keyword id="KW-0840">Vasodilator</keyword>
<proteinExistence type="evidence at protein level"/>
<feature type="peptide" id="PRO_0000404687" description="[Ala1,Thr6]-bradykinin" evidence="2">
    <location>
        <begin position="1"/>
        <end position="9"/>
    </location>
</feature>
<name>BRK2_PHYSG</name>
<comment type="function">
    <text evidence="1">Produces in vitro relaxation of rat arterial smooth muscle and constriction of intestinal smooth muscle (By similarity). May target bradykinin receptors (BDKRB).</text>
</comment>
<comment type="subcellular location">
    <subcellularLocation>
        <location evidence="2">Secreted</location>
    </subcellularLocation>
</comment>
<comment type="tissue specificity">
    <text evidence="2">Expressed by the skin glands.</text>
</comment>
<comment type="similarity">
    <text evidence="4">Belongs to the bradykinin-related peptide family.</text>
</comment>
<dbReference type="GO" id="GO:0005576">
    <property type="term" value="C:extracellular region"/>
    <property type="evidence" value="ECO:0007669"/>
    <property type="project" value="UniProtKB-SubCell"/>
</dbReference>
<dbReference type="GO" id="GO:0090729">
    <property type="term" value="F:toxin activity"/>
    <property type="evidence" value="ECO:0007669"/>
    <property type="project" value="UniProtKB-KW"/>
</dbReference>
<dbReference type="GO" id="GO:0006952">
    <property type="term" value="P:defense response"/>
    <property type="evidence" value="ECO:0007669"/>
    <property type="project" value="UniProtKB-KW"/>
</dbReference>
<dbReference type="GO" id="GO:0042311">
    <property type="term" value="P:vasodilation"/>
    <property type="evidence" value="ECO:0007669"/>
    <property type="project" value="UniProtKB-KW"/>
</dbReference>
<organism>
    <name type="scientific">Physalaemus signifer</name>
    <name type="common">Girard's dwarf frog</name>
    <dbReference type="NCBI Taxonomy" id="364768"/>
    <lineage>
        <taxon>Eukaryota</taxon>
        <taxon>Metazoa</taxon>
        <taxon>Chordata</taxon>
        <taxon>Craniata</taxon>
        <taxon>Vertebrata</taxon>
        <taxon>Euteleostomi</taxon>
        <taxon>Amphibia</taxon>
        <taxon>Batrachia</taxon>
        <taxon>Anura</taxon>
        <taxon>Neobatrachia</taxon>
        <taxon>Hyloidea</taxon>
        <taxon>Leptodactylidae</taxon>
        <taxon>Leiuperinae</taxon>
        <taxon>Physalaemus</taxon>
    </lineage>
</organism>
<sequence>APPGFTPFR</sequence>
<accession>P86812</accession>